<dbReference type="EC" id="3.4.14.5"/>
<dbReference type="EMBL" id="GG663372">
    <property type="protein sequence ID" value="EEH04721.1"/>
    <property type="molecule type" value="Genomic_DNA"/>
</dbReference>
<dbReference type="SMR" id="C0NUQ8"/>
<dbReference type="FunCoup" id="C0NUQ8">
    <property type="interactions" value="281"/>
</dbReference>
<dbReference type="STRING" id="447093.C0NUQ8"/>
<dbReference type="ESTHER" id="ajecn-dapb">
    <property type="family name" value="DPP4N_Peptidase_S9"/>
</dbReference>
<dbReference type="MEROPS" id="S09.006"/>
<dbReference type="GlyCosmos" id="C0NUQ8">
    <property type="glycosylation" value="5 sites, No reported glycans"/>
</dbReference>
<dbReference type="VEuPathDB" id="FungiDB:I7I50_12559"/>
<dbReference type="HOGENOM" id="CLU_006105_0_1_1"/>
<dbReference type="InParanoid" id="C0NUQ8"/>
<dbReference type="Proteomes" id="UP000001631">
    <property type="component" value="Unassembled WGS sequence"/>
</dbReference>
<dbReference type="GO" id="GO:0005886">
    <property type="term" value="C:plasma membrane"/>
    <property type="evidence" value="ECO:0007669"/>
    <property type="project" value="TreeGrafter"/>
</dbReference>
<dbReference type="GO" id="GO:0005774">
    <property type="term" value="C:vacuolar membrane"/>
    <property type="evidence" value="ECO:0007669"/>
    <property type="project" value="UniProtKB-SubCell"/>
</dbReference>
<dbReference type="GO" id="GO:0004177">
    <property type="term" value="F:aminopeptidase activity"/>
    <property type="evidence" value="ECO:0007669"/>
    <property type="project" value="UniProtKB-KW"/>
</dbReference>
<dbReference type="GO" id="GO:0008239">
    <property type="term" value="F:dipeptidyl-peptidase activity"/>
    <property type="evidence" value="ECO:0007669"/>
    <property type="project" value="UniProtKB-EC"/>
</dbReference>
<dbReference type="GO" id="GO:0008236">
    <property type="term" value="F:serine-type peptidase activity"/>
    <property type="evidence" value="ECO:0007669"/>
    <property type="project" value="UniProtKB-KW"/>
</dbReference>
<dbReference type="GO" id="GO:0006508">
    <property type="term" value="P:proteolysis"/>
    <property type="evidence" value="ECO:0007669"/>
    <property type="project" value="UniProtKB-KW"/>
</dbReference>
<dbReference type="FunFam" id="3.40.50.1820:FF:000003">
    <property type="entry name" value="Dipeptidyl peptidase 4"/>
    <property type="match status" value="1"/>
</dbReference>
<dbReference type="Gene3D" id="3.40.50.1820">
    <property type="entry name" value="alpha/beta hydrolase"/>
    <property type="match status" value="1"/>
</dbReference>
<dbReference type="Gene3D" id="2.140.10.30">
    <property type="entry name" value="Dipeptidylpeptidase IV, N-terminal domain"/>
    <property type="match status" value="1"/>
</dbReference>
<dbReference type="InterPro" id="IPR029058">
    <property type="entry name" value="AB_hydrolase_fold"/>
</dbReference>
<dbReference type="InterPro" id="IPR001375">
    <property type="entry name" value="Peptidase_S9_cat"/>
</dbReference>
<dbReference type="InterPro" id="IPR002469">
    <property type="entry name" value="Peptidase_S9B_N"/>
</dbReference>
<dbReference type="InterPro" id="IPR050278">
    <property type="entry name" value="Serine_Prot_S9B/DPPIV"/>
</dbReference>
<dbReference type="PANTHER" id="PTHR11731:SF200">
    <property type="entry name" value="DIPEPTIDYL PEPTIDASE 10, ISOFORM B"/>
    <property type="match status" value="1"/>
</dbReference>
<dbReference type="PANTHER" id="PTHR11731">
    <property type="entry name" value="PROTEASE FAMILY S9B,C DIPEPTIDYL-PEPTIDASE IV-RELATED"/>
    <property type="match status" value="1"/>
</dbReference>
<dbReference type="Pfam" id="PF00930">
    <property type="entry name" value="DPPIV_N"/>
    <property type="match status" value="1"/>
</dbReference>
<dbReference type="Pfam" id="PF00326">
    <property type="entry name" value="Peptidase_S9"/>
    <property type="match status" value="1"/>
</dbReference>
<dbReference type="SUPFAM" id="SSF53474">
    <property type="entry name" value="alpha/beta-Hydrolases"/>
    <property type="match status" value="1"/>
</dbReference>
<dbReference type="SUPFAM" id="SSF82171">
    <property type="entry name" value="DPP6 N-terminal domain-like"/>
    <property type="match status" value="1"/>
</dbReference>
<accession>C0NUQ8</accession>
<organism>
    <name type="scientific">Ajellomyces capsulatus (strain G186AR / H82 / ATCC MYA-2454 / RMSCC 2432)</name>
    <name type="common">Darling's disease fungus</name>
    <name type="synonym">Histoplasma capsulatum</name>
    <dbReference type="NCBI Taxonomy" id="447093"/>
    <lineage>
        <taxon>Eukaryota</taxon>
        <taxon>Fungi</taxon>
        <taxon>Dikarya</taxon>
        <taxon>Ascomycota</taxon>
        <taxon>Pezizomycotina</taxon>
        <taxon>Eurotiomycetes</taxon>
        <taxon>Eurotiomycetidae</taxon>
        <taxon>Onygenales</taxon>
        <taxon>Ajellomycetaceae</taxon>
        <taxon>Histoplasma</taxon>
    </lineage>
</organism>
<name>DAPB_AJECG</name>
<sequence>MATEKGHGRDDEERVPLTRGSTEFRNSIDSFDYSSSTASLSLAVIDRINNSTQDAALGEKGPRDDDDDRYWDDDVEYDVEDADYIPSGGKPMHKSVKIALWTLLFLSLGGWSLAFVLFIFRSHDTYETPISSEDNISSGGLRGDRITLDDVLGEEWMPRHHFISWFPGPNGEDGLLLEKDGPGSTGYLRVEDIVSRKDTKSSKGSIVLMRKNTFTVGGETVICSQVWPSPDLKTVLVLSEKKQNWRHSFTGKYWLFDVDTQTGQPLDPAAQDQRIQLASWSPQSDAVVFTRDNNMFLRKLSSKEVTTITSDGGVDLFYGVPDWVYEEEVFSGNSATWWAHDGNYIAFLRTNESAVPEYPLQYFVSRPSGEDPNLGEENYPEVREIKYPKAGAPNPIVDLQFYDVRKGEIFSVDVADRFPDDNRLIIEVLWASNGKVLVRETNRESDILIIAAINVLSRTGKIVRKEDINALDGGWVEPTQSTRFIPADPSNGRPEDGYIDTVIHEGRDQLAYFTPLDNPEPLILTKGPSEVVNSPSGVDLKRGLVYFVVAGNEPWERHVYSVKFDGTALQPVTNVSESSYYDVSFSDGAGYALLNFQGPKVPWQKVISTPANENPFEEIIEQNNHLSRKLRLFSLESKVFQYINIDGFSLPVLERRPPNFDPTKKYPVLFYLYGGPGSQTVDKKFRVDFQSYVASTLGYIVVTVDGRGTGYIGRKSLSIVRGKLGHYEARDQIEVAKKWAAKPYVDESRMAIWGWSYGGFMTLKTIEEDGGRTFQYGMAVAPVTDWRYYDSIYAERYMHTPQHNPQGYDSSAISNTTALANNVRFLVMHGTADDNVHIQNTLTLLDKLDLANVDNYDVHVFPDSDHNINFHNAHKIVYTRLADWLVNAFNGQWLKTNNPTPNDSLFRRAATWAGLSYNFKHLH</sequence>
<keyword id="KW-0031">Aminopeptidase</keyword>
<keyword id="KW-0325">Glycoprotein</keyword>
<keyword id="KW-0378">Hydrolase</keyword>
<keyword id="KW-0472">Membrane</keyword>
<keyword id="KW-0645">Protease</keyword>
<keyword id="KW-1185">Reference proteome</keyword>
<keyword id="KW-0720">Serine protease</keyword>
<keyword id="KW-0735">Signal-anchor</keyword>
<keyword id="KW-0812">Transmembrane</keyword>
<keyword id="KW-1133">Transmembrane helix</keyword>
<keyword id="KW-0926">Vacuole</keyword>
<proteinExistence type="inferred from homology"/>
<reference key="1">
    <citation type="submission" date="2009-02" db="EMBL/GenBank/DDBJ databases">
        <title>The genome sequence of Ajellomyces capsulatus strain G186AR.</title>
        <authorList>
            <person name="Champion M."/>
            <person name="Cuomo C.A."/>
            <person name="Ma L.-J."/>
            <person name="Henn M.R."/>
            <person name="Sil A."/>
            <person name="Goldman B."/>
            <person name="Young S.K."/>
            <person name="Kodira C.D."/>
            <person name="Zeng Q."/>
            <person name="Koehrsen M."/>
            <person name="Alvarado L."/>
            <person name="Berlin A."/>
            <person name="Borenstein D."/>
            <person name="Chen Z."/>
            <person name="Engels R."/>
            <person name="Freedman E."/>
            <person name="Gellesch M."/>
            <person name="Goldberg J."/>
            <person name="Griggs A."/>
            <person name="Gujja S."/>
            <person name="Heiman D."/>
            <person name="Hepburn T."/>
            <person name="Howarth C."/>
            <person name="Jen D."/>
            <person name="Larson L."/>
            <person name="Lewis B."/>
            <person name="Mehta T."/>
            <person name="Park D."/>
            <person name="Pearson M."/>
            <person name="Roberts A."/>
            <person name="Saif S."/>
            <person name="Shea T."/>
            <person name="Shenoy N."/>
            <person name="Sisk P."/>
            <person name="Stolte C."/>
            <person name="Sykes S."/>
            <person name="Walk T."/>
            <person name="White J."/>
            <person name="Yandava C."/>
            <person name="Klein B."/>
            <person name="McEwen J.G."/>
            <person name="Puccia R."/>
            <person name="Goldman G.H."/>
            <person name="Felipe M.S."/>
            <person name="Nino-Vega G."/>
            <person name="San-Blas G."/>
            <person name="Taylor J."/>
            <person name="Mendoza L."/>
            <person name="Galagan J.E."/>
            <person name="Nusbaum C."/>
            <person name="Birren B.W."/>
        </authorList>
    </citation>
    <scope>NUCLEOTIDE SEQUENCE [LARGE SCALE GENOMIC DNA]</scope>
    <source>
        <strain>G186AR / H82 / ATCC MYA-2454 / RMSCC 2432</strain>
    </source>
</reference>
<feature type="chain" id="PRO_0000412124" description="Probable dipeptidyl-aminopeptidase B">
    <location>
        <begin position="1"/>
        <end position="923"/>
    </location>
</feature>
<feature type="topological domain" description="Cytoplasmic" evidence="2">
    <location>
        <begin position="1"/>
        <end position="99"/>
    </location>
</feature>
<feature type="transmembrane region" description="Helical; Signal-anchor for type II membrane protein" evidence="2">
    <location>
        <begin position="100"/>
        <end position="120"/>
    </location>
</feature>
<feature type="topological domain" description="Vacuolar" evidence="2">
    <location>
        <begin position="121"/>
        <end position="923"/>
    </location>
</feature>
<feature type="region of interest" description="Disordered" evidence="3">
    <location>
        <begin position="1"/>
        <end position="21"/>
    </location>
</feature>
<feature type="compositionally biased region" description="Basic and acidic residues" evidence="3">
    <location>
        <begin position="1"/>
        <end position="16"/>
    </location>
</feature>
<feature type="active site" description="Charge relay system" evidence="1">
    <location>
        <position position="756"/>
    </location>
</feature>
<feature type="active site" description="Charge relay system" evidence="1">
    <location>
        <position position="833"/>
    </location>
</feature>
<feature type="active site" description="Charge relay system" evidence="1">
    <location>
        <position position="866"/>
    </location>
</feature>
<feature type="glycosylation site" description="N-linked (GlcNAc...) asparagine" evidence="2">
    <location>
        <position position="135"/>
    </location>
</feature>
<feature type="glycosylation site" description="N-linked (GlcNAc...) asparagine" evidence="2">
    <location>
        <position position="351"/>
    </location>
</feature>
<feature type="glycosylation site" description="N-linked (GlcNAc...) asparagine" evidence="2">
    <location>
        <position position="574"/>
    </location>
</feature>
<feature type="glycosylation site" description="N-linked (GlcNAc...) asparagine" evidence="2">
    <location>
        <position position="815"/>
    </location>
</feature>
<feature type="glycosylation site" description="N-linked (GlcNAc...) asparagine" evidence="2">
    <location>
        <position position="902"/>
    </location>
</feature>
<comment type="function">
    <text evidence="1">Type IV dipeptidyl-peptidase which removes N-terminal dipeptides sequentially from polypeptides having unsubstituted N-termini provided that the penultimate residue is proline.</text>
</comment>
<comment type="catalytic activity">
    <reaction>
        <text>Release of an N-terminal dipeptide, Xaa-Yaa-|-Zaa-, from a polypeptide, preferentially when Yaa is Pro, provided Zaa is neither Pro nor hydroxyproline.</text>
        <dbReference type="EC" id="3.4.14.5"/>
    </reaction>
</comment>
<comment type="subcellular location">
    <subcellularLocation>
        <location evidence="1">Vacuole membrane</location>
        <topology evidence="1">Single-pass type II membrane protein</topology>
    </subcellularLocation>
    <text evidence="1">Lysosome-like vacuoles.</text>
</comment>
<comment type="similarity">
    <text evidence="4">Belongs to the peptidase S9B family.</text>
</comment>
<gene>
    <name type="primary">DAPB</name>
    <name type="ORF">HCBG_06672</name>
</gene>
<protein>
    <recommendedName>
        <fullName>Probable dipeptidyl-aminopeptidase B</fullName>
        <shortName>DPAP B</shortName>
        <ecNumber>3.4.14.5</ecNumber>
    </recommendedName>
</protein>
<evidence type="ECO:0000250" key="1"/>
<evidence type="ECO:0000255" key="2"/>
<evidence type="ECO:0000256" key="3">
    <source>
        <dbReference type="SAM" id="MobiDB-lite"/>
    </source>
</evidence>
<evidence type="ECO:0000305" key="4"/>